<organism>
    <name type="scientific">Acyrthosiphon pisum secondary endosymbiont phage 1</name>
    <name type="common">Bacteriophage APSE-1</name>
    <dbReference type="NCBI Taxonomy" id="2682836"/>
    <lineage>
        <taxon>Viruses</taxon>
        <taxon>Duplodnaviria</taxon>
        <taxon>Heunggongvirae</taxon>
        <taxon>Uroviricota</taxon>
        <taxon>Caudoviricetes</taxon>
        <taxon>Sendosyvirus</taxon>
        <taxon>Sendosyvirus APSE1</taxon>
    </lineage>
</organism>
<name>VP54_BPAPS</name>
<dbReference type="EMBL" id="AF157835">
    <property type="protein sequence ID" value="AAF03997.1"/>
    <property type="molecule type" value="Genomic_DNA"/>
</dbReference>
<dbReference type="RefSeq" id="NP_051015.1">
    <property type="nucleotide sequence ID" value="NC_000935.1"/>
</dbReference>
<dbReference type="SMR" id="Q9T1P4"/>
<dbReference type="KEGG" id="vg:1262348"/>
<dbReference type="Proteomes" id="UP000000853">
    <property type="component" value="Genome"/>
</dbReference>
<organismHost>
    <name type="scientific">Escherichia coli</name>
    <dbReference type="NCBI Taxonomy" id="562"/>
</organismHost>
<sequence>MVRFNCFITEQDGQGDHVTQIKRFNINRFRFRRYFRVFNHRFNGFSRFRFCLGDFTLFLGNNRCWLVIGFSVCFDNRRRLNDYFRLNDN</sequence>
<proteinExistence type="predicted"/>
<gene>
    <name type="primary">54</name>
</gene>
<feature type="chain" id="PRO_0000077878" description="Putative protein p54">
    <location>
        <begin position="1"/>
        <end position="89"/>
    </location>
</feature>
<keyword id="KW-1185">Reference proteome</keyword>
<accession>Q9T1P4</accession>
<protein>
    <recommendedName>
        <fullName>Putative protein p54</fullName>
    </recommendedName>
</protein>
<reference key="1">
    <citation type="journal article" date="1999" name="Virology">
        <title>Isolation and characterization of APSE-1, a bacteriophage infecting the secondary endosymbiont of acyrthosiphon pisum.</title>
        <authorList>
            <person name="van der Wilk F."/>
            <person name="Dullemans A.M."/>
            <person name="Verbeek M."/>
            <person name="van den Heuvel J.F.J.M."/>
        </authorList>
    </citation>
    <scope>NUCLEOTIDE SEQUENCE [LARGE SCALE GENOMIC DNA]</scope>
</reference>